<dbReference type="EMBL" id="AE000520">
    <property type="protein sequence ID" value="AAC65467.1"/>
    <property type="molecule type" value="Genomic_DNA"/>
</dbReference>
<dbReference type="PIR" id="G71318">
    <property type="entry name" value="G71318"/>
</dbReference>
<dbReference type="RefSeq" id="WP_010881922.1">
    <property type="nucleotide sequence ID" value="NC_021490.2"/>
</dbReference>
<dbReference type="IntAct" id="O83486">
    <property type="interactions" value="2"/>
</dbReference>
<dbReference type="STRING" id="243276.TP_0473"/>
<dbReference type="EnsemblBacteria" id="AAC65467">
    <property type="protein sequence ID" value="AAC65467"/>
    <property type="gene ID" value="TP_0473"/>
</dbReference>
<dbReference type="KEGG" id="tpa:TP_0473"/>
<dbReference type="KEGG" id="tpw:TPANIC_0473"/>
<dbReference type="HOGENOM" id="CLU_1288413_0_0_12"/>
<dbReference type="Proteomes" id="UP000000811">
    <property type="component" value="Chromosome"/>
</dbReference>
<dbReference type="GO" id="GO:0005886">
    <property type="term" value="C:plasma membrane"/>
    <property type="evidence" value="ECO:0007669"/>
    <property type="project" value="UniProtKB-SubCell"/>
</dbReference>
<gene>
    <name type="ordered locus">TP_0473</name>
</gene>
<reference key="1">
    <citation type="journal article" date="1998" name="Science">
        <title>Complete genome sequence of Treponema pallidum, the syphilis spirochete.</title>
        <authorList>
            <person name="Fraser C.M."/>
            <person name="Norris S.J."/>
            <person name="Weinstock G.M."/>
            <person name="White O."/>
            <person name="Sutton G.G."/>
            <person name="Dodson R.J."/>
            <person name="Gwinn M.L."/>
            <person name="Hickey E.K."/>
            <person name="Clayton R.A."/>
            <person name="Ketchum K.A."/>
            <person name="Sodergren E."/>
            <person name="Hardham J.M."/>
            <person name="McLeod M.P."/>
            <person name="Salzberg S.L."/>
            <person name="Peterson J.D."/>
            <person name="Khalak H.G."/>
            <person name="Richardson D.L."/>
            <person name="Howell J.K."/>
            <person name="Chidambaram M."/>
            <person name="Utterback T.R."/>
            <person name="McDonald L.A."/>
            <person name="Artiach P."/>
            <person name="Bowman C."/>
            <person name="Cotton M.D."/>
            <person name="Fujii C."/>
            <person name="Garland S.A."/>
            <person name="Hatch B."/>
            <person name="Horst K."/>
            <person name="Roberts K.M."/>
            <person name="Sandusky M."/>
            <person name="Weidman J.F."/>
            <person name="Smith H.O."/>
            <person name="Venter J.C."/>
        </authorList>
    </citation>
    <scope>NUCLEOTIDE SEQUENCE [LARGE SCALE GENOMIC DNA]</scope>
    <source>
        <strain>Nichols</strain>
    </source>
</reference>
<protein>
    <recommendedName>
        <fullName>Uncharacterized protein TP_0473</fullName>
    </recommendedName>
</protein>
<sequence length="214" mass="24002">MVTVSIVEIFLIISLPLLFFSSFADAGDPLQELISFVHGAVLAVPLLLLRSFFLGYYPPDSALVEEQWMRFFLFDYVFPLFCLPFFLFTSRSLERVSLVSGVSALFGAYTSFFFVHVYTQLNDPDLLARVMTLVLYMTNLLQLHAHVSFSMRTRLPLLGLIAALCIFLLMGAFSATVMTLCFFNARTVVYTSMLAGAGGVALLTHFFAVRINVR</sequence>
<keyword id="KW-1003">Cell membrane</keyword>
<keyword id="KW-0472">Membrane</keyword>
<keyword id="KW-1185">Reference proteome</keyword>
<keyword id="KW-0812">Transmembrane</keyword>
<keyword id="KW-1133">Transmembrane helix</keyword>
<comment type="subcellular location">
    <subcellularLocation>
        <location evidence="2">Cell membrane</location>
        <topology evidence="2">Multi-pass membrane protein</topology>
    </subcellularLocation>
</comment>
<proteinExistence type="predicted"/>
<evidence type="ECO:0000255" key="1"/>
<evidence type="ECO:0000305" key="2"/>
<accession>O83486</accession>
<feature type="chain" id="PRO_0000202261" description="Uncharacterized protein TP_0473">
    <location>
        <begin position="1"/>
        <end position="214"/>
    </location>
</feature>
<feature type="transmembrane region" description="Helical" evidence="1">
    <location>
        <begin position="4"/>
        <end position="23"/>
    </location>
</feature>
<feature type="transmembrane region" description="Helical" evidence="1">
    <location>
        <begin position="35"/>
        <end position="57"/>
    </location>
</feature>
<feature type="transmembrane region" description="Helical" evidence="1">
    <location>
        <begin position="67"/>
        <end position="89"/>
    </location>
</feature>
<feature type="transmembrane region" description="Helical" evidence="1">
    <location>
        <begin position="96"/>
        <end position="118"/>
    </location>
</feature>
<feature type="transmembrane region" description="Helical" evidence="1">
    <location>
        <begin position="128"/>
        <end position="150"/>
    </location>
</feature>
<feature type="transmembrane region" description="Helical" evidence="1">
    <location>
        <begin position="155"/>
        <end position="177"/>
    </location>
</feature>
<feature type="transmembrane region" description="Helical" evidence="1">
    <location>
        <begin position="187"/>
        <end position="209"/>
    </location>
</feature>
<name>Y473_TREPA</name>
<organism>
    <name type="scientific">Treponema pallidum (strain Nichols)</name>
    <dbReference type="NCBI Taxonomy" id="243276"/>
    <lineage>
        <taxon>Bacteria</taxon>
        <taxon>Pseudomonadati</taxon>
        <taxon>Spirochaetota</taxon>
        <taxon>Spirochaetia</taxon>
        <taxon>Spirochaetales</taxon>
        <taxon>Treponemataceae</taxon>
        <taxon>Treponema</taxon>
    </lineage>
</organism>